<name>PEPDB_STRPQ</name>
<reference key="1">
    <citation type="journal article" date="2003" name="Genome Res.">
        <title>Genome sequence of an M3 strain of Streptococcus pyogenes reveals a large-scale genomic rearrangement in invasive strains and new insights into phage evolution.</title>
        <authorList>
            <person name="Nakagawa I."/>
            <person name="Kurokawa K."/>
            <person name="Yamashita A."/>
            <person name="Nakata M."/>
            <person name="Tomiyasu Y."/>
            <person name="Okahashi N."/>
            <person name="Kawabata S."/>
            <person name="Yamazaki K."/>
            <person name="Shiba T."/>
            <person name="Yasunaga T."/>
            <person name="Hayashi H."/>
            <person name="Hattori M."/>
            <person name="Hamada S."/>
        </authorList>
    </citation>
    <scope>NUCLEOTIDE SEQUENCE [LARGE SCALE GENOMIC DNA]</scope>
    <source>
        <strain>SSI-1</strain>
    </source>
</reference>
<sequence length="499" mass="55554">MINKKISLGVLSILTAFSLQSVSYACTGFIIGKDLTKDGSLLYGRTEDLEPHHNKNFIVRLAKDNPAGEKWKDPSNGFEYPLPEHSYRYSAIPDVTPNKGVYDEAGFNEFGVSMSATVSTSANDAIQKIDPYVKNGLAESSMASVILPSVKTAREGVALIAKIVTEKGAAEGNIVTLADKDGIWYMEILSGHQYVAIKFPDDKYAVFPNTFYLGHVDFNDKENTIASEDVEKVAKKAKSYTEVDGKFHIAKSYNPPLNDANRSRSFSGIKSLDPDSKVTYKDSNYELLQSTDKTFSLEDAMKLQRNRFEGLDLKPLDQMALDGKGKPKSKKAVKGYAYPISNPNVMEAHIFQLKKDIPAELGGGVMWLSIGSPRNAPYLPYLGNISRTYEAYQEKSTQYNDKSWYWTVSHINDLVAAHPKPFGTKVIDEMKGLEKTWIAEQDKTTKEISDLVVSDPKAAQEKADKISLDRAEKTFKRLKAIEAKLVKEKPKNKKGLNRS</sequence>
<accession>P0DD27</accession>
<accession>Q79W34</accession>
<accession>Q8K5M7</accession>
<protein>
    <recommendedName>
        <fullName>Probable dipeptidase B</fullName>
        <ecNumber>3.4.13.19</ecNumber>
    </recommendedName>
</protein>
<evidence type="ECO:0000255" key="1"/>
<evidence type="ECO:0000305" key="2"/>
<feature type="chain" id="PRO_0000411451" description="Probable dipeptidase B">
    <location>
        <begin position="1"/>
        <end position="499"/>
    </location>
</feature>
<feature type="active site" evidence="1">
    <location>
        <position position="26"/>
    </location>
</feature>
<proteinExistence type="inferred from homology"/>
<comment type="catalytic activity">
    <reaction>
        <text>an L-aminoacyl-L-amino acid + H2O = 2 an L-alpha-amino acid</text>
        <dbReference type="Rhea" id="RHEA:48940"/>
        <dbReference type="ChEBI" id="CHEBI:15377"/>
        <dbReference type="ChEBI" id="CHEBI:59869"/>
        <dbReference type="ChEBI" id="CHEBI:77460"/>
        <dbReference type="EC" id="3.4.13.19"/>
    </reaction>
</comment>
<comment type="similarity">
    <text evidence="2">Belongs to the peptidase C69 family.</text>
</comment>
<gene>
    <name type="primary">pepDB</name>
    <name type="ordered locus">SPs1760</name>
</gene>
<keyword id="KW-0224">Dipeptidase</keyword>
<keyword id="KW-0378">Hydrolase</keyword>
<keyword id="KW-0645">Protease</keyword>
<organism>
    <name type="scientific">Streptococcus pyogenes serotype M3 (strain SSI-1)</name>
    <dbReference type="NCBI Taxonomy" id="193567"/>
    <lineage>
        <taxon>Bacteria</taxon>
        <taxon>Bacillati</taxon>
        <taxon>Bacillota</taxon>
        <taxon>Bacilli</taxon>
        <taxon>Lactobacillales</taxon>
        <taxon>Streptococcaceae</taxon>
        <taxon>Streptococcus</taxon>
    </lineage>
</organism>
<dbReference type="EC" id="3.4.13.19"/>
<dbReference type="EMBL" id="BA000034">
    <property type="protein sequence ID" value="BAC64855.1"/>
    <property type="molecule type" value="Genomic_DNA"/>
</dbReference>
<dbReference type="RefSeq" id="WP_011055067.1">
    <property type="nucleotide sequence ID" value="NC_004606.1"/>
</dbReference>
<dbReference type="SMR" id="P0DD27"/>
<dbReference type="MEROPS" id="C69.002"/>
<dbReference type="KEGG" id="sps:SPs1760"/>
<dbReference type="HOGENOM" id="CLU_014823_0_1_9"/>
<dbReference type="GO" id="GO:0070004">
    <property type="term" value="F:cysteine-type exopeptidase activity"/>
    <property type="evidence" value="ECO:0007669"/>
    <property type="project" value="InterPro"/>
</dbReference>
<dbReference type="GO" id="GO:0016805">
    <property type="term" value="F:dipeptidase activity"/>
    <property type="evidence" value="ECO:0007669"/>
    <property type="project" value="UniProtKB-KW"/>
</dbReference>
<dbReference type="GO" id="GO:0006508">
    <property type="term" value="P:proteolysis"/>
    <property type="evidence" value="ECO:0007669"/>
    <property type="project" value="UniProtKB-KW"/>
</dbReference>
<dbReference type="Gene3D" id="3.60.60.10">
    <property type="entry name" value="Penicillin V Acylase, Chain A"/>
    <property type="match status" value="1"/>
</dbReference>
<dbReference type="InterPro" id="IPR047804">
    <property type="entry name" value="C69_dipept_A-like"/>
</dbReference>
<dbReference type="InterPro" id="IPR005322">
    <property type="entry name" value="Peptidase_C69"/>
</dbReference>
<dbReference type="NCBIfam" id="NF033678">
    <property type="entry name" value="C69_fam_dipept"/>
    <property type="match status" value="1"/>
</dbReference>
<dbReference type="PANTHER" id="PTHR12994:SF17">
    <property type="entry name" value="LD30995P"/>
    <property type="match status" value="1"/>
</dbReference>
<dbReference type="PANTHER" id="PTHR12994">
    <property type="entry name" value="SECERNIN"/>
    <property type="match status" value="1"/>
</dbReference>
<dbReference type="Pfam" id="PF03577">
    <property type="entry name" value="Peptidase_C69"/>
    <property type="match status" value="1"/>
</dbReference>